<feature type="chain" id="PRO_0000352761" description="UDP-GlcNAc:betaGal beta-1,3-N-acetylglucosaminyltransferase 9">
    <location>
        <begin position="1"/>
        <end position="401"/>
    </location>
</feature>
<feature type="topological domain" description="Cytoplasmic" evidence="2">
    <location>
        <begin position="1"/>
        <end position="10"/>
    </location>
</feature>
<feature type="transmembrane region" description="Helical; Signal-anchor for type II membrane protein" evidence="2">
    <location>
        <begin position="11"/>
        <end position="31"/>
    </location>
</feature>
<feature type="topological domain" description="Lumenal" evidence="2">
    <location>
        <begin position="32"/>
        <end position="401"/>
    </location>
</feature>
<feature type="region of interest" description="Disordered" evidence="3">
    <location>
        <begin position="33"/>
        <end position="85"/>
    </location>
</feature>
<feature type="compositionally biased region" description="Low complexity" evidence="3">
    <location>
        <begin position="38"/>
        <end position="47"/>
    </location>
</feature>
<dbReference type="EC" id="2.4.1.-"/>
<dbReference type="EMBL" id="BC118097">
    <property type="protein sequence ID" value="AAI18098.1"/>
    <property type="molecule type" value="mRNA"/>
</dbReference>
<dbReference type="RefSeq" id="NP_001069810.1">
    <property type="nucleotide sequence ID" value="NM_001076342.1"/>
</dbReference>
<dbReference type="RefSeq" id="XP_024834256.1">
    <property type="nucleotide sequence ID" value="XM_024978488.2"/>
</dbReference>
<dbReference type="SMR" id="Q17QZ8"/>
<dbReference type="FunCoup" id="Q17QZ8">
    <property type="interactions" value="492"/>
</dbReference>
<dbReference type="STRING" id="9913.ENSBTAP00000058412"/>
<dbReference type="CAZy" id="GT31">
    <property type="family name" value="Glycosyltransferase Family 31"/>
</dbReference>
<dbReference type="Ensembl" id="ENSBTAT00000085214.2">
    <property type="protein sequence ID" value="ENSBTAP00000058412.1"/>
    <property type="gene ID" value="ENSBTAG00000049665.2"/>
</dbReference>
<dbReference type="Ensembl" id="ENSBTAT00000092011.1">
    <property type="protein sequence ID" value="ENSBTAP00000084569.1"/>
    <property type="gene ID" value="ENSBTAG00000049665.2"/>
</dbReference>
<dbReference type="GeneID" id="614717"/>
<dbReference type="KEGG" id="bta:614717"/>
<dbReference type="CTD" id="84752"/>
<dbReference type="VEuPathDB" id="HostDB:ENSBTAG00000049665"/>
<dbReference type="VGNC" id="VGNC:106646">
    <property type="gene designation" value="B3GNT9"/>
</dbReference>
<dbReference type="GeneTree" id="ENSGT00940000162243"/>
<dbReference type="InParanoid" id="Q17QZ8"/>
<dbReference type="OMA" id="PFQWKKK"/>
<dbReference type="OrthoDB" id="2139606at2759"/>
<dbReference type="Reactome" id="R-BTA-913709">
    <property type="pathway name" value="O-linked glycosylation of mucins"/>
</dbReference>
<dbReference type="Proteomes" id="UP000009136">
    <property type="component" value="Chromosome 18"/>
</dbReference>
<dbReference type="Bgee" id="ENSBTAG00000049665">
    <property type="expression patterns" value="Expressed in pigment epithelium of eye and 98 other cell types or tissues"/>
</dbReference>
<dbReference type="GO" id="GO:0000139">
    <property type="term" value="C:Golgi membrane"/>
    <property type="evidence" value="ECO:0000318"/>
    <property type="project" value="GO_Central"/>
</dbReference>
<dbReference type="GO" id="GO:0016758">
    <property type="term" value="F:hexosyltransferase activity"/>
    <property type="evidence" value="ECO:0007669"/>
    <property type="project" value="InterPro"/>
</dbReference>
<dbReference type="GO" id="GO:0008194">
    <property type="term" value="F:UDP-glycosyltransferase activity"/>
    <property type="evidence" value="ECO:0000318"/>
    <property type="project" value="GO_Central"/>
</dbReference>
<dbReference type="GO" id="GO:0030311">
    <property type="term" value="P:poly-N-acetyllactosamine biosynthetic process"/>
    <property type="evidence" value="ECO:0000318"/>
    <property type="project" value="GO_Central"/>
</dbReference>
<dbReference type="GO" id="GO:0006493">
    <property type="term" value="P:protein O-linked glycosylation"/>
    <property type="evidence" value="ECO:0000318"/>
    <property type="project" value="GO_Central"/>
</dbReference>
<dbReference type="FunFam" id="3.90.550.50:FF:000020">
    <property type="entry name" value="Hexosyltransferase"/>
    <property type="match status" value="1"/>
</dbReference>
<dbReference type="Gene3D" id="3.90.550.50">
    <property type="match status" value="1"/>
</dbReference>
<dbReference type="InterPro" id="IPR002659">
    <property type="entry name" value="Glyco_trans_31"/>
</dbReference>
<dbReference type="PANTHER" id="PTHR11214">
    <property type="entry name" value="BETA-1,3-N-ACETYLGLUCOSAMINYLTRANSFERASE"/>
    <property type="match status" value="1"/>
</dbReference>
<dbReference type="PANTHER" id="PTHR11214:SF91">
    <property type="entry name" value="UDP-GLCNAC:BETAGAL BETA-1,3-N-ACETYLGLUCOSAMINYLTRANSFERASE 9"/>
    <property type="match status" value="1"/>
</dbReference>
<dbReference type="Pfam" id="PF01762">
    <property type="entry name" value="Galactosyl_T"/>
    <property type="match status" value="1"/>
</dbReference>
<name>B3GN9_BOVIN</name>
<comment type="subcellular location">
    <subcellularLocation>
        <location evidence="2">Golgi apparatus membrane</location>
        <topology evidence="2">Single-pass type II membrane protein</topology>
    </subcellularLocation>
</comment>
<comment type="similarity">
    <text evidence="2">Belongs to the glycosyltransferase 31 family.</text>
</comment>
<accession>Q17QZ8</accession>
<sequence>MRRRLRLRREALLTLLLGATLGLLLYAQQEGAAPTTSAPRAQGRAAPGPTPGLRVFQAPDTGAAPPAYEGDTPEPPTPTGPFDFGRYLRAKDQRRFPLLINQPHKCQGNGAFPRGPDLLIAVKSVAADFERRQAVRQTWGAEGRVQGALVRRVFLLGVPRGTGTVAGEAEAGTQTHWSALLRAESRAYADILLWAFDDTFFNLTLKEIHFLAWASDYCPDVRFVFKGDADVFVHVGNLLEFLAPRDPAQDLLAGDVIVQARPIRVRASKYYIPEAVYGLPAYPAYAGGGGFVLSGATLRRLAGACAQVELFPIDDVFLGMCLQRLRLTPEPHPAFRTFGIPRPSAAPHLHTFDPCFYRELVVVHGLSAADIWLMWHLLHGPNGPACARPWPVPAGPFQWGP</sequence>
<protein>
    <recommendedName>
        <fullName evidence="1">UDP-GlcNAc:betaGal beta-1,3-N-acetylglucosaminyltransferase 9</fullName>
        <shortName evidence="1">BGnT-9</shortName>
        <shortName>Beta-1,3-Gn-T9</shortName>
        <shortName>Beta-1,3-N-acetylglucosaminyltransferase 9</shortName>
        <shortName evidence="1">Beta3Gn-T9</shortName>
        <ecNumber>2.4.1.-</ecNumber>
    </recommendedName>
</protein>
<organism>
    <name type="scientific">Bos taurus</name>
    <name type="common">Bovine</name>
    <dbReference type="NCBI Taxonomy" id="9913"/>
    <lineage>
        <taxon>Eukaryota</taxon>
        <taxon>Metazoa</taxon>
        <taxon>Chordata</taxon>
        <taxon>Craniata</taxon>
        <taxon>Vertebrata</taxon>
        <taxon>Euteleostomi</taxon>
        <taxon>Mammalia</taxon>
        <taxon>Eutheria</taxon>
        <taxon>Laurasiatheria</taxon>
        <taxon>Artiodactyla</taxon>
        <taxon>Ruminantia</taxon>
        <taxon>Pecora</taxon>
        <taxon>Bovidae</taxon>
        <taxon>Bovinae</taxon>
        <taxon>Bos</taxon>
    </lineage>
</organism>
<evidence type="ECO:0000250" key="1">
    <source>
        <dbReference type="UniProtKB" id="Q6UX72"/>
    </source>
</evidence>
<evidence type="ECO:0000255" key="2"/>
<evidence type="ECO:0000256" key="3">
    <source>
        <dbReference type="SAM" id="MobiDB-lite"/>
    </source>
</evidence>
<evidence type="ECO:0000312" key="4">
    <source>
        <dbReference type="EMBL" id="AAI18098.1"/>
    </source>
</evidence>
<proteinExistence type="evidence at transcript level"/>
<reference evidence="4" key="1">
    <citation type="submission" date="2006-06" db="EMBL/GenBank/DDBJ databases">
        <authorList>
            <consortium name="NIH - Mammalian Gene Collection (MGC) project"/>
        </authorList>
    </citation>
    <scope>NUCLEOTIDE SEQUENCE [LARGE SCALE MRNA]</scope>
    <source>
        <strain evidence="4">Hereford</strain>
        <tissue evidence="4">Uterus</tissue>
    </source>
</reference>
<keyword id="KW-0328">Glycosyltransferase</keyword>
<keyword id="KW-0333">Golgi apparatus</keyword>
<keyword id="KW-0472">Membrane</keyword>
<keyword id="KW-1185">Reference proteome</keyword>
<keyword id="KW-0735">Signal-anchor</keyword>
<keyword id="KW-0808">Transferase</keyword>
<keyword id="KW-0812">Transmembrane</keyword>
<keyword id="KW-1133">Transmembrane helix</keyword>
<gene>
    <name evidence="1" type="primary">B3GNT9</name>
</gene>